<keyword id="KW-0067">ATP-binding</keyword>
<keyword id="KW-0963">Cytoplasm</keyword>
<keyword id="KW-0418">Kinase</keyword>
<keyword id="KW-0460">Magnesium</keyword>
<keyword id="KW-0479">Metal-binding</keyword>
<keyword id="KW-0547">Nucleotide-binding</keyword>
<keyword id="KW-1185">Reference proteome</keyword>
<keyword id="KW-0808">Transferase</keyword>
<protein>
    <recommendedName>
        <fullName evidence="1">Acetate kinase</fullName>
        <ecNumber evidence="1">2.7.2.1</ecNumber>
    </recommendedName>
    <alternativeName>
        <fullName evidence="1">Acetokinase</fullName>
    </alternativeName>
</protein>
<comment type="function">
    <text evidence="1">Catalyzes the formation of acetyl phosphate from acetate and ATP. Can also catalyze the reverse reaction.</text>
</comment>
<comment type="catalytic activity">
    <reaction evidence="1">
        <text>acetate + ATP = acetyl phosphate + ADP</text>
        <dbReference type="Rhea" id="RHEA:11352"/>
        <dbReference type="ChEBI" id="CHEBI:22191"/>
        <dbReference type="ChEBI" id="CHEBI:30089"/>
        <dbReference type="ChEBI" id="CHEBI:30616"/>
        <dbReference type="ChEBI" id="CHEBI:456216"/>
        <dbReference type="EC" id="2.7.2.1"/>
    </reaction>
</comment>
<comment type="cofactor">
    <cofactor evidence="1">
        <name>Mg(2+)</name>
        <dbReference type="ChEBI" id="CHEBI:18420"/>
    </cofactor>
    <cofactor evidence="1">
        <name>Mn(2+)</name>
        <dbReference type="ChEBI" id="CHEBI:29035"/>
    </cofactor>
    <text evidence="1">Mg(2+). Can also accept Mn(2+).</text>
</comment>
<comment type="pathway">
    <text evidence="1">Metabolic intermediate biosynthesis; acetyl-CoA biosynthesis; acetyl-CoA from acetate: step 1/2.</text>
</comment>
<comment type="subunit">
    <text evidence="1">Homodimer.</text>
</comment>
<comment type="subcellular location">
    <subcellularLocation>
        <location evidence="1">Cytoplasm</location>
    </subcellularLocation>
</comment>
<comment type="similarity">
    <text evidence="1">Belongs to the acetokinase family.</text>
</comment>
<name>ACKA_BUCAI</name>
<proteinExistence type="inferred from homology"/>
<dbReference type="EC" id="2.7.2.1" evidence="1"/>
<dbReference type="EMBL" id="BA000003">
    <property type="protein sequence ID" value="BAB12892.1"/>
    <property type="molecule type" value="Genomic_DNA"/>
</dbReference>
<dbReference type="RefSeq" id="NP_240006.1">
    <property type="nucleotide sequence ID" value="NC_002528.1"/>
</dbReference>
<dbReference type="RefSeq" id="WP_010895984.1">
    <property type="nucleotide sequence ID" value="NC_002528.1"/>
</dbReference>
<dbReference type="SMR" id="P57272"/>
<dbReference type="STRING" id="563178.BUAP5A_172"/>
<dbReference type="EnsemblBacteria" id="BAB12892">
    <property type="protein sequence ID" value="BAB12892"/>
    <property type="gene ID" value="BAB12892"/>
</dbReference>
<dbReference type="KEGG" id="buc:BU175"/>
<dbReference type="PATRIC" id="fig|107806.10.peg.186"/>
<dbReference type="eggNOG" id="COG0282">
    <property type="taxonomic scope" value="Bacteria"/>
</dbReference>
<dbReference type="HOGENOM" id="CLU_020352_0_1_6"/>
<dbReference type="UniPathway" id="UPA00340">
    <property type="reaction ID" value="UER00458"/>
</dbReference>
<dbReference type="Proteomes" id="UP000001806">
    <property type="component" value="Chromosome"/>
</dbReference>
<dbReference type="GO" id="GO:0005829">
    <property type="term" value="C:cytosol"/>
    <property type="evidence" value="ECO:0007669"/>
    <property type="project" value="TreeGrafter"/>
</dbReference>
<dbReference type="GO" id="GO:0008776">
    <property type="term" value="F:acetate kinase activity"/>
    <property type="evidence" value="ECO:0007669"/>
    <property type="project" value="UniProtKB-UniRule"/>
</dbReference>
<dbReference type="GO" id="GO:0005524">
    <property type="term" value="F:ATP binding"/>
    <property type="evidence" value="ECO:0007669"/>
    <property type="project" value="UniProtKB-KW"/>
</dbReference>
<dbReference type="GO" id="GO:0000287">
    <property type="term" value="F:magnesium ion binding"/>
    <property type="evidence" value="ECO:0007669"/>
    <property type="project" value="UniProtKB-UniRule"/>
</dbReference>
<dbReference type="GO" id="GO:0006083">
    <property type="term" value="P:acetate metabolic process"/>
    <property type="evidence" value="ECO:0007669"/>
    <property type="project" value="TreeGrafter"/>
</dbReference>
<dbReference type="GO" id="GO:0006085">
    <property type="term" value="P:acetyl-CoA biosynthetic process"/>
    <property type="evidence" value="ECO:0007669"/>
    <property type="project" value="UniProtKB-UniRule"/>
</dbReference>
<dbReference type="CDD" id="cd24010">
    <property type="entry name" value="ASKHA_NBD_AcK_PK"/>
    <property type="match status" value="1"/>
</dbReference>
<dbReference type="Gene3D" id="3.30.420.40">
    <property type="match status" value="2"/>
</dbReference>
<dbReference type="HAMAP" id="MF_00020">
    <property type="entry name" value="Acetate_kinase"/>
    <property type="match status" value="1"/>
</dbReference>
<dbReference type="InterPro" id="IPR004372">
    <property type="entry name" value="Ac/propionate_kinase"/>
</dbReference>
<dbReference type="InterPro" id="IPR000890">
    <property type="entry name" value="Aliphatic_acid_kin_short-chain"/>
</dbReference>
<dbReference type="InterPro" id="IPR023865">
    <property type="entry name" value="Aliphatic_acid_kinase_CS"/>
</dbReference>
<dbReference type="InterPro" id="IPR043129">
    <property type="entry name" value="ATPase_NBD"/>
</dbReference>
<dbReference type="NCBIfam" id="TIGR00016">
    <property type="entry name" value="ackA"/>
    <property type="match status" value="1"/>
</dbReference>
<dbReference type="PANTHER" id="PTHR21060">
    <property type="entry name" value="ACETATE KINASE"/>
    <property type="match status" value="1"/>
</dbReference>
<dbReference type="PANTHER" id="PTHR21060:SF21">
    <property type="entry name" value="ACETATE KINASE"/>
    <property type="match status" value="1"/>
</dbReference>
<dbReference type="Pfam" id="PF00871">
    <property type="entry name" value="Acetate_kinase"/>
    <property type="match status" value="1"/>
</dbReference>
<dbReference type="PIRSF" id="PIRSF000722">
    <property type="entry name" value="Acetate_prop_kin"/>
    <property type="match status" value="1"/>
</dbReference>
<dbReference type="PRINTS" id="PR00471">
    <property type="entry name" value="ACETATEKNASE"/>
</dbReference>
<dbReference type="SUPFAM" id="SSF53067">
    <property type="entry name" value="Actin-like ATPase domain"/>
    <property type="match status" value="2"/>
</dbReference>
<dbReference type="PROSITE" id="PS01075">
    <property type="entry name" value="ACETATE_KINASE_1"/>
    <property type="match status" value="1"/>
</dbReference>
<dbReference type="PROSITE" id="PS01076">
    <property type="entry name" value="ACETATE_KINASE_2"/>
    <property type="match status" value="1"/>
</dbReference>
<reference key="1">
    <citation type="journal article" date="2000" name="Nature">
        <title>Genome sequence of the endocellular bacterial symbiont of aphids Buchnera sp. APS.</title>
        <authorList>
            <person name="Shigenobu S."/>
            <person name="Watanabe H."/>
            <person name="Hattori M."/>
            <person name="Sakaki Y."/>
            <person name="Ishikawa H."/>
        </authorList>
    </citation>
    <scope>NUCLEOTIDE SEQUENCE [LARGE SCALE GENOMIC DNA]</scope>
    <source>
        <strain>APS</strain>
    </source>
</reference>
<sequence length="405" mass="45141">MDKKLNNLILVLNCGSSSIKFAILNPDNKEKYLSGSVECLFLLETYITWQCLGTKHKKKIGANVNHKDALNFIIEQVFSQQKDIFKNLIGVGHRVVHGGTKIKKSTLIDSNIIKCIQDASSFAPLHNPANLIGIKMIIEKYPSLSRKNIAVFDTSFYCNMPETSFLYAIPYNFYKKYGIRRYGAHGISHNYVAHRASLMLNKQFKSLNIITCHLGNGSSISAICNGICVDTSMGLTPLEGLVMGTRSGDLDPSIIFFMNNHLNLSIDKIETILNKKSGLLGLSGISSDFRYFEKKYYCKKHAKRSVDIFCHRLSKYIAAYTSVLENRLDAVIFTGGIGENVPLIRELVFSRLSLLGFKINSNLNLSTIGGKSGLITEDNSTPVFVITTDEELAIAQETNSIINRK</sequence>
<evidence type="ECO:0000255" key="1">
    <source>
        <dbReference type="HAMAP-Rule" id="MF_00020"/>
    </source>
</evidence>
<accession>P57272</accession>
<feature type="chain" id="PRO_0000107538" description="Acetate kinase">
    <location>
        <begin position="1"/>
        <end position="405"/>
    </location>
</feature>
<feature type="active site" description="Proton donor/acceptor" evidence="1">
    <location>
        <position position="153"/>
    </location>
</feature>
<feature type="binding site" evidence="1">
    <location>
        <position position="13"/>
    </location>
    <ligand>
        <name>Mg(2+)</name>
        <dbReference type="ChEBI" id="CHEBI:18420"/>
    </ligand>
</feature>
<feature type="binding site" evidence="1">
    <location>
        <position position="20"/>
    </location>
    <ligand>
        <name>ATP</name>
        <dbReference type="ChEBI" id="CHEBI:30616"/>
    </ligand>
</feature>
<feature type="binding site" evidence="1">
    <location>
        <position position="94"/>
    </location>
    <ligand>
        <name>substrate</name>
    </ligand>
</feature>
<feature type="binding site" evidence="1">
    <location>
        <begin position="213"/>
        <end position="217"/>
    </location>
    <ligand>
        <name>ATP</name>
        <dbReference type="ChEBI" id="CHEBI:30616"/>
    </ligand>
</feature>
<feature type="binding site" evidence="1">
    <location>
        <begin position="288"/>
        <end position="290"/>
    </location>
    <ligand>
        <name>ATP</name>
        <dbReference type="ChEBI" id="CHEBI:30616"/>
    </ligand>
</feature>
<feature type="binding site" evidence="1">
    <location>
        <begin position="336"/>
        <end position="340"/>
    </location>
    <ligand>
        <name>ATP</name>
        <dbReference type="ChEBI" id="CHEBI:30616"/>
    </ligand>
</feature>
<feature type="binding site" evidence="1">
    <location>
        <position position="390"/>
    </location>
    <ligand>
        <name>Mg(2+)</name>
        <dbReference type="ChEBI" id="CHEBI:18420"/>
    </ligand>
</feature>
<feature type="site" description="Transition state stabilizer" evidence="1">
    <location>
        <position position="185"/>
    </location>
</feature>
<feature type="site" description="Transition state stabilizer" evidence="1">
    <location>
        <position position="246"/>
    </location>
</feature>
<organism>
    <name type="scientific">Buchnera aphidicola subsp. Acyrthosiphon pisum (strain APS)</name>
    <name type="common">Acyrthosiphon pisum symbiotic bacterium</name>
    <dbReference type="NCBI Taxonomy" id="107806"/>
    <lineage>
        <taxon>Bacteria</taxon>
        <taxon>Pseudomonadati</taxon>
        <taxon>Pseudomonadota</taxon>
        <taxon>Gammaproteobacteria</taxon>
        <taxon>Enterobacterales</taxon>
        <taxon>Erwiniaceae</taxon>
        <taxon>Buchnera</taxon>
    </lineage>
</organism>
<gene>
    <name evidence="1" type="primary">ackA</name>
    <name type="ordered locus">BU175</name>
</gene>